<organism>
    <name type="scientific">Influenza A virus (strain A/Shearwater/Australia/1972 H6N5)</name>
    <dbReference type="NCBI Taxonomy" id="383604"/>
    <lineage>
        <taxon>Viruses</taxon>
        <taxon>Riboviria</taxon>
        <taxon>Orthornavirae</taxon>
        <taxon>Negarnaviricota</taxon>
        <taxon>Polyploviricotina</taxon>
        <taxon>Insthoviricetes</taxon>
        <taxon>Articulavirales</taxon>
        <taxon>Orthomyxoviridae</taxon>
        <taxon>Alphainfluenzavirus</taxon>
        <taxon>Alphainfluenzavirus influenzae</taxon>
        <taxon>Influenza A virus</taxon>
    </lineage>
</organism>
<accession>P21931</accession>
<protein>
    <recommendedName>
        <fullName evidence="1">Nucleoprotein</fullName>
    </recommendedName>
    <alternativeName>
        <fullName evidence="1">Nucleocapsid protein</fullName>
        <shortName evidence="1">Protein N</shortName>
    </alternativeName>
</protein>
<comment type="function">
    <text evidence="1">Encapsidates the negative strand viral RNA, protecting it from nucleases. The encapsidated genomic RNA is termed the ribonucleoprotein (RNP) and serves as template for transcription and replication. The RNP needs to be localized in the host nucleus to start an infectious cycle, but is too large to diffuse through the nuclear pore complex. NP comprises at least 2 nuclear localization signals that are responsible for the active RNP import into the nucleus through cellular importin alpha/beta pathway. Later in the infection, nclear export of RNPs are mediated through viral proteins NEP interacting with M1 which binds nucleoproteins. It is possible that nucleoprotein binds directly host exportin-1/XPO1 and plays an active role in RNPs nuclear export. M1 interaction with RNP seems to hide nucleoprotein's nuclear localization signals. Soon after a virion infects a new cell, M1 dissociates from the RNP under acidification of the virion driven by M2 protein. Dissociation of M1 from RNP unmasks nucleoprotein's nuclear localization signals, targeting the RNP to the nucleus.</text>
</comment>
<comment type="subunit">
    <text evidence="1">Homomultimerizes to form the nucleocapsid. May bind host exportin-1/XPO1. Binds to viral genomic RNA. Protein-RNA contacts are mediated by a combination of electrostatic interactions between positively charged residues and the phosphate backbone and planar interactions between aromatic side chains and bases.</text>
</comment>
<comment type="subcellular location">
    <subcellularLocation>
        <location evidence="1">Virion</location>
    </subcellularLocation>
    <subcellularLocation>
        <location evidence="1">Host nucleus</location>
    </subcellularLocation>
</comment>
<comment type="PTM">
    <text evidence="1">Late in virus-infected cells, may be cleaved from a 56-kDa protein to a 53-kDa protein by a cellular caspase. This cleavage might be a marker for the onset of apoptosis in infected cells or have a specific function in virus host interaction.</text>
</comment>
<comment type="similarity">
    <text evidence="1">Belongs to the influenza viruses nucleoprotein family.</text>
</comment>
<name>NCAP_I72A5</name>
<reference key="1">
    <citation type="journal article" date="1990" name="Mol. Biol. Evol.">
        <title>Phylogenetic analysis of nucleoproteins suggests that human influenza A viruses emerged from a 19th-century avian ancestor.</title>
        <authorList>
            <person name="Gammelin M."/>
            <person name="Altmueller A."/>
            <person name="Reinhardt U."/>
            <person name="Mandler J."/>
            <person name="Harley V.R."/>
            <person name="Hudson P.J."/>
            <person name="Fitch W.M."/>
            <person name="Scholtissek C."/>
        </authorList>
    </citation>
    <scope>NUCLEOTIDE SEQUENCE [GENOMIC RNA]</scope>
</reference>
<reference key="2">
    <citation type="journal article" date="1990" name="Arch. Virol.">
        <title>Vaccinia virus expression and sequence of an avian influenza nucleoprotein gene: potential use in diagnosis.</title>
        <authorList>
            <person name="Harley V.R."/>
            <person name="Hudson P.J."/>
            <person name="Coupar B.E.H."/>
            <person name="Selleck P.W."/>
            <person name="Westbury H."/>
            <person name="Boyle D.B."/>
        </authorList>
    </citation>
    <scope>NUCLEOTIDE SEQUENCE [GENOMIC RNA]</scope>
</reference>
<evidence type="ECO:0000255" key="1">
    <source>
        <dbReference type="HAMAP-Rule" id="MF_04070"/>
    </source>
</evidence>
<evidence type="ECO:0000256" key="2">
    <source>
        <dbReference type="SAM" id="MobiDB-lite"/>
    </source>
</evidence>
<keyword id="KW-0167">Capsid protein</keyword>
<keyword id="KW-1139">Helical capsid protein</keyword>
<keyword id="KW-1048">Host nucleus</keyword>
<keyword id="KW-0945">Host-virus interaction</keyword>
<keyword id="KW-0687">Ribonucleoprotein</keyword>
<keyword id="KW-0694">RNA-binding</keyword>
<keyword id="KW-0543">Viral nucleoprotein</keyword>
<keyword id="KW-1163">Viral penetration into host nucleus</keyword>
<keyword id="KW-0946">Virion</keyword>
<keyword id="KW-1160">Virus entry into host cell</keyword>
<feature type="chain" id="PRO_0000079099" description="Nucleoprotein">
    <location>
        <begin position="1"/>
        <end position="498"/>
    </location>
</feature>
<feature type="region of interest" description="Disordered" evidence="2">
    <location>
        <begin position="1"/>
        <end position="21"/>
    </location>
</feature>
<feature type="short sequence motif" description="Unconventional nuclear localization signal" evidence="1">
    <location>
        <begin position="1"/>
        <end position="18"/>
    </location>
</feature>
<feature type="short sequence motif" description="Bipartite nuclear localization signal" evidence="1">
    <location>
        <begin position="198"/>
        <end position="216"/>
    </location>
</feature>
<sequence>MASQGTKRSYEQMETGGERQNATEIRASVGRMVGGIGRFYIQMCTELKLSDHEGRLIQNSITIERMVLSAFDERRNKYLEEHPSAGKDPKKTGGPIYRRRDGKWMRELILYDKEEIRRIWRQRNNGDDATAGLTHLMIWHSNLNDATYQRTRALVRTGMDPRMCSLMQGSTLPRRSGAAGAAVKGVGTMVMELIRMIKRGINDRNFWRGENGRRTRIAYERMCNILKGKFQTAAQRAMMDQVRESRNPGNAEIEDLIFLARSALILRGSVAHKSCLPACVYGLAVAGGYDFEREGYSLVGIDPFRLLQNSQVFSLIRPNENPAHKSQLVWMACHSAAFEDLRVSNFIRGTRVVPRGKLSTRGVQIASNENMETMDSSTLELRSRYWAIRTRSGGNTNQQRASAGQISVQPTFSVQRNLPFERATIMAAFTGNTEGRTSDMRTEIIRMMESARPEDVSFQGRGVFELSDEKATNPIVPSFDMSNEGSYFFGDNAEEYDN</sequence>
<dbReference type="EMBL" id="M27298">
    <property type="protein sequence ID" value="AAA43666.1"/>
    <property type="molecule type" value="Genomic_RNA"/>
</dbReference>
<dbReference type="SMR" id="P21931"/>
<dbReference type="Proteomes" id="UP000157292">
    <property type="component" value="Genome"/>
</dbReference>
<dbReference type="GO" id="GO:0019029">
    <property type="term" value="C:helical viral capsid"/>
    <property type="evidence" value="ECO:0007669"/>
    <property type="project" value="UniProtKB-UniRule"/>
</dbReference>
<dbReference type="GO" id="GO:0043657">
    <property type="term" value="C:host cell"/>
    <property type="evidence" value="ECO:0007669"/>
    <property type="project" value="GOC"/>
</dbReference>
<dbReference type="GO" id="GO:0042025">
    <property type="term" value="C:host cell nucleus"/>
    <property type="evidence" value="ECO:0007669"/>
    <property type="project" value="UniProtKB-SubCell"/>
</dbReference>
<dbReference type="GO" id="GO:1990904">
    <property type="term" value="C:ribonucleoprotein complex"/>
    <property type="evidence" value="ECO:0007669"/>
    <property type="project" value="UniProtKB-KW"/>
</dbReference>
<dbReference type="GO" id="GO:0019013">
    <property type="term" value="C:viral nucleocapsid"/>
    <property type="evidence" value="ECO:0007669"/>
    <property type="project" value="UniProtKB-UniRule"/>
</dbReference>
<dbReference type="GO" id="GO:0003723">
    <property type="term" value="F:RNA binding"/>
    <property type="evidence" value="ECO:0007669"/>
    <property type="project" value="UniProtKB-UniRule"/>
</dbReference>
<dbReference type="GO" id="GO:0005198">
    <property type="term" value="F:structural molecule activity"/>
    <property type="evidence" value="ECO:0007669"/>
    <property type="project" value="UniProtKB-UniRule"/>
</dbReference>
<dbReference type="GO" id="GO:0046718">
    <property type="term" value="P:symbiont entry into host cell"/>
    <property type="evidence" value="ECO:0007669"/>
    <property type="project" value="UniProtKB-KW"/>
</dbReference>
<dbReference type="GO" id="GO:0075732">
    <property type="term" value="P:viral penetration into host nucleus"/>
    <property type="evidence" value="ECO:0007669"/>
    <property type="project" value="UniProtKB-UniRule"/>
</dbReference>
<dbReference type="HAMAP" id="MF_04070">
    <property type="entry name" value="INFV_NCAP"/>
    <property type="match status" value="1"/>
</dbReference>
<dbReference type="InterPro" id="IPR002141">
    <property type="entry name" value="Flu_NP"/>
</dbReference>
<dbReference type="Pfam" id="PF00506">
    <property type="entry name" value="Flu_NP"/>
    <property type="match status" value="1"/>
</dbReference>
<dbReference type="SUPFAM" id="SSF161003">
    <property type="entry name" value="flu NP-like"/>
    <property type="match status" value="1"/>
</dbReference>
<organismHost>
    <name type="scientific">Aves</name>
    <dbReference type="NCBI Taxonomy" id="8782"/>
</organismHost>
<proteinExistence type="inferred from homology"/>
<gene>
    <name evidence="1" type="primary">NP</name>
</gene>